<evidence type="ECO:0000250" key="1"/>
<evidence type="ECO:0000305" key="2"/>
<proteinExistence type="inferred from homology"/>
<comment type="function">
    <text evidence="1">Specifically methylates the guanine in position 966 of 16S rRNA in the assembled 30S particle.</text>
</comment>
<comment type="catalytic activity">
    <reaction>
        <text>guanosine(966) in 16S rRNA + S-adenosyl-L-methionine = N(2)-methylguanosine(966) in 16S rRNA + S-adenosyl-L-homocysteine + H(+)</text>
        <dbReference type="Rhea" id="RHEA:23548"/>
        <dbReference type="Rhea" id="RHEA-COMP:10211"/>
        <dbReference type="Rhea" id="RHEA-COMP:10212"/>
        <dbReference type="ChEBI" id="CHEBI:15378"/>
        <dbReference type="ChEBI" id="CHEBI:57856"/>
        <dbReference type="ChEBI" id="CHEBI:59789"/>
        <dbReference type="ChEBI" id="CHEBI:74269"/>
        <dbReference type="ChEBI" id="CHEBI:74481"/>
        <dbReference type="EC" id="2.1.1.171"/>
    </reaction>
</comment>
<comment type="similarity">
    <text evidence="2">Belongs to the methyltransferase superfamily. RsmD family.</text>
</comment>
<organism>
    <name type="scientific">Escherichia coli O6:H1 (strain CFT073 / ATCC 700928 / UPEC)</name>
    <dbReference type="NCBI Taxonomy" id="199310"/>
    <lineage>
        <taxon>Bacteria</taxon>
        <taxon>Pseudomonadati</taxon>
        <taxon>Pseudomonadota</taxon>
        <taxon>Gammaproteobacteria</taxon>
        <taxon>Enterobacterales</taxon>
        <taxon>Enterobacteriaceae</taxon>
        <taxon>Escherichia</taxon>
    </lineage>
</organism>
<dbReference type="EC" id="2.1.1.171"/>
<dbReference type="EMBL" id="AE014075">
    <property type="protein sequence ID" value="AAN82694.1"/>
    <property type="molecule type" value="Genomic_DNA"/>
</dbReference>
<dbReference type="RefSeq" id="WP_000743193.1">
    <property type="nucleotide sequence ID" value="NZ_CP051263.1"/>
</dbReference>
<dbReference type="SMR" id="P0ADY0"/>
<dbReference type="STRING" id="199310.c4258"/>
<dbReference type="GeneID" id="93778526"/>
<dbReference type="KEGG" id="ecc:c4258"/>
<dbReference type="eggNOG" id="COG0742">
    <property type="taxonomic scope" value="Bacteria"/>
</dbReference>
<dbReference type="HOGENOM" id="CLU_075826_2_2_6"/>
<dbReference type="BioCyc" id="ECOL199310:C4258-MONOMER"/>
<dbReference type="Proteomes" id="UP000001410">
    <property type="component" value="Chromosome"/>
</dbReference>
<dbReference type="GO" id="GO:0052913">
    <property type="term" value="F:16S rRNA (guanine(966)-N(2))-methyltransferase activity"/>
    <property type="evidence" value="ECO:0007669"/>
    <property type="project" value="UniProtKB-EC"/>
</dbReference>
<dbReference type="GO" id="GO:0003676">
    <property type="term" value="F:nucleic acid binding"/>
    <property type="evidence" value="ECO:0007669"/>
    <property type="project" value="InterPro"/>
</dbReference>
<dbReference type="CDD" id="cd02440">
    <property type="entry name" value="AdoMet_MTases"/>
    <property type="match status" value="1"/>
</dbReference>
<dbReference type="FunFam" id="3.40.50.150:FF:000082">
    <property type="entry name" value="Ribosomal RNA small subunit methyltransferase D"/>
    <property type="match status" value="1"/>
</dbReference>
<dbReference type="Gene3D" id="3.40.50.150">
    <property type="entry name" value="Vaccinia Virus protein VP39"/>
    <property type="match status" value="1"/>
</dbReference>
<dbReference type="InterPro" id="IPR002052">
    <property type="entry name" value="DNA_methylase_N6_adenine_CS"/>
</dbReference>
<dbReference type="InterPro" id="IPR004398">
    <property type="entry name" value="RNA_MeTrfase_RsmD"/>
</dbReference>
<dbReference type="InterPro" id="IPR029063">
    <property type="entry name" value="SAM-dependent_MTases_sf"/>
</dbReference>
<dbReference type="NCBIfam" id="TIGR00095">
    <property type="entry name" value="16S rRNA (guanine(966)-N(2))-methyltransferase RsmD"/>
    <property type="match status" value="1"/>
</dbReference>
<dbReference type="NCBIfam" id="NF008157">
    <property type="entry name" value="PRK10909.1"/>
    <property type="match status" value="1"/>
</dbReference>
<dbReference type="PANTHER" id="PTHR43542">
    <property type="entry name" value="METHYLTRANSFERASE"/>
    <property type="match status" value="1"/>
</dbReference>
<dbReference type="PANTHER" id="PTHR43542:SF1">
    <property type="entry name" value="METHYLTRANSFERASE"/>
    <property type="match status" value="1"/>
</dbReference>
<dbReference type="Pfam" id="PF03602">
    <property type="entry name" value="Cons_hypoth95"/>
    <property type="match status" value="1"/>
</dbReference>
<dbReference type="PIRSF" id="PIRSF004553">
    <property type="entry name" value="CHP00095"/>
    <property type="match status" value="1"/>
</dbReference>
<dbReference type="SUPFAM" id="SSF53335">
    <property type="entry name" value="S-adenosyl-L-methionine-dependent methyltransferases"/>
    <property type="match status" value="1"/>
</dbReference>
<dbReference type="PROSITE" id="PS00092">
    <property type="entry name" value="N6_MTASE"/>
    <property type="match status" value="1"/>
</dbReference>
<gene>
    <name type="primary">rsmD</name>
    <name type="ordered locus">c4258</name>
</gene>
<feature type="chain" id="PRO_0000169549" description="Ribosomal RNA small subunit methyltransferase D">
    <location>
        <begin position="1"/>
        <end position="198"/>
    </location>
</feature>
<reference key="1">
    <citation type="journal article" date="2002" name="Proc. Natl. Acad. Sci. U.S.A.">
        <title>Extensive mosaic structure revealed by the complete genome sequence of uropathogenic Escherichia coli.</title>
        <authorList>
            <person name="Welch R.A."/>
            <person name="Burland V."/>
            <person name="Plunkett G. III"/>
            <person name="Redford P."/>
            <person name="Roesch P."/>
            <person name="Rasko D."/>
            <person name="Buckles E.L."/>
            <person name="Liou S.-R."/>
            <person name="Boutin A."/>
            <person name="Hackett J."/>
            <person name="Stroud D."/>
            <person name="Mayhew G.F."/>
            <person name="Rose D.J."/>
            <person name="Zhou S."/>
            <person name="Schwartz D.C."/>
            <person name="Perna N.T."/>
            <person name="Mobley H.L.T."/>
            <person name="Donnenberg M.S."/>
            <person name="Blattner F.R."/>
        </authorList>
    </citation>
    <scope>NUCLEOTIDE SEQUENCE [LARGE SCALE GENOMIC DNA]</scope>
    <source>
        <strain>CFT073 / ATCC 700928 / UPEC</strain>
    </source>
</reference>
<name>RSMD_ECOL6</name>
<keyword id="KW-0489">Methyltransferase</keyword>
<keyword id="KW-1185">Reference proteome</keyword>
<keyword id="KW-0698">rRNA processing</keyword>
<keyword id="KW-0949">S-adenosyl-L-methionine</keyword>
<keyword id="KW-0808">Transferase</keyword>
<sequence length="198" mass="21678">MKKPNHSGSGQIRIIGGQWRGRKLPVPDSPGLRPTTDRVRETLFNWLAPVIVDAQCLDCFAGSGALGLEALSRYAAGATLIEMDRAVSQQLIKNLATLKAGNARVVNSNAMSFLAQKGTPHNIVFVDPPFRRGLLEETINLLEDNGWLADEALIYVESEVENGLPTVPANWSLHREKVAGQVAYRLYQREAQGESDAD</sequence>
<accession>P0ADY0</accession>
<accession>P10120</accession>
<protein>
    <recommendedName>
        <fullName>Ribosomal RNA small subunit methyltransferase D</fullName>
        <ecNumber>2.1.1.171</ecNumber>
    </recommendedName>
    <alternativeName>
        <fullName>16S rRNA m2G966 methyltransferase</fullName>
    </alternativeName>
    <alternativeName>
        <fullName>rRNA (guanine-N(2)-)-methyltransferase</fullName>
    </alternativeName>
</protein>